<evidence type="ECO:0000250" key="1"/>
<evidence type="ECO:0000250" key="2">
    <source>
        <dbReference type="UniProtKB" id="P10636"/>
    </source>
</evidence>
<evidence type="ECO:0000250" key="3">
    <source>
        <dbReference type="UniProtKB" id="P19332"/>
    </source>
</evidence>
<evidence type="ECO:0000255" key="4">
    <source>
        <dbReference type="PROSITE-ProRule" id="PRU00824"/>
    </source>
</evidence>
<evidence type="ECO:0000256" key="5">
    <source>
        <dbReference type="SAM" id="MobiDB-lite"/>
    </source>
</evidence>
<evidence type="ECO:0000269" key="6">
    <source>
    </source>
</evidence>
<evidence type="ECO:0000269" key="7">
    <source>
    </source>
</evidence>
<evidence type="ECO:0000269" key="8">
    <source>
    </source>
</evidence>
<evidence type="ECO:0000269" key="9">
    <source>
    </source>
</evidence>
<evidence type="ECO:0000269" key="10">
    <source>
    </source>
</evidence>
<evidence type="ECO:0000303" key="11">
    <source>
    </source>
</evidence>
<evidence type="ECO:0000303" key="12">
    <source>
    </source>
</evidence>
<evidence type="ECO:0000303" key="13">
    <source>
    </source>
</evidence>
<evidence type="ECO:0000305" key="14"/>
<evidence type="ECO:0000312" key="15">
    <source>
        <dbReference type="MGI" id="MGI:97180"/>
    </source>
</evidence>
<evidence type="ECO:0007744" key="16">
    <source>
    </source>
</evidence>
<evidence type="ECO:0007744" key="17">
    <source>
    </source>
</evidence>
<evidence type="ECO:0007744" key="18">
    <source>
    </source>
</evidence>
<evidence type="ECO:0007829" key="19">
    <source>
        <dbReference type="PDB" id="6H0E"/>
    </source>
</evidence>
<evidence type="ECO:0007829" key="20">
    <source>
        <dbReference type="PDB" id="8Q96"/>
    </source>
</evidence>
<dbReference type="EMBL" id="U12914">
    <property type="protein sequence ID" value="AAA58343.1"/>
    <property type="molecule type" value="mRNA"/>
</dbReference>
<dbReference type="EMBL" id="U12915">
    <property type="protein sequence ID" value="AAA58344.1"/>
    <property type="molecule type" value="mRNA"/>
</dbReference>
<dbReference type="EMBL" id="U12916">
    <property type="protein sequence ID" value="AAA58345.1"/>
    <property type="molecule type" value="mRNA"/>
</dbReference>
<dbReference type="EMBL" id="Z12133">
    <property type="protein sequence ID" value="CAA78121.1"/>
    <property type="molecule type" value="mRNA"/>
</dbReference>
<dbReference type="EMBL" id="M93266">
    <property type="status" value="NOT_ANNOTATED_CDS"/>
    <property type="molecule type" value="mRNA"/>
</dbReference>
<dbReference type="EMBL" id="M18775">
    <property type="protein sequence ID" value="AAA40165.1"/>
    <property type="molecule type" value="mRNA"/>
</dbReference>
<dbReference type="EMBL" id="M18776">
    <property type="protein sequence ID" value="AAA40166.1"/>
    <property type="molecule type" value="mRNA"/>
</dbReference>
<dbReference type="EMBL" id="D30627">
    <property type="protein sequence ID" value="BAA18878.1"/>
    <property type="molecule type" value="Genomic_DNA"/>
</dbReference>
<dbReference type="EMBL" id="AL593843">
    <property type="protein sequence ID" value="CAM14797.1"/>
    <property type="molecule type" value="Genomic_DNA"/>
</dbReference>
<dbReference type="EMBL" id="BC014748">
    <property type="protein sequence ID" value="AAH14748.1"/>
    <property type="molecule type" value="mRNA"/>
</dbReference>
<dbReference type="CCDS" id="CCDS25527.1">
    <molecule id="P10637-2"/>
</dbReference>
<dbReference type="CCDS" id="CCDS25528.1">
    <molecule id="P10637-5"/>
</dbReference>
<dbReference type="PIR" id="A28820">
    <property type="entry name" value="A28820"/>
</dbReference>
<dbReference type="PIR" id="A45301">
    <property type="entry name" value="A45301"/>
</dbReference>
<dbReference type="PIR" id="B28820">
    <property type="entry name" value="B28820"/>
</dbReference>
<dbReference type="RefSeq" id="NP_001033698.1">
    <molecule id="P10637-2"/>
    <property type="nucleotide sequence ID" value="NM_001038609.3"/>
</dbReference>
<dbReference type="RefSeq" id="NP_001272383.1">
    <molecule id="P10637-3"/>
    <property type="nucleotide sequence ID" value="NM_001285454.2"/>
</dbReference>
<dbReference type="RefSeq" id="NP_001272384.1">
    <molecule id="P10637-6"/>
    <property type="nucleotide sequence ID" value="NM_001285455.2"/>
</dbReference>
<dbReference type="RefSeq" id="NP_001272385.1">
    <molecule id="P10637-4"/>
    <property type="nucleotide sequence ID" value="NM_001285456.2"/>
</dbReference>
<dbReference type="RefSeq" id="NP_001390940.1">
    <molecule id="P10637-5"/>
    <property type="nucleotide sequence ID" value="NM_001404011.1"/>
</dbReference>
<dbReference type="RefSeq" id="NP_001390941.1">
    <molecule id="P10637-4"/>
    <property type="nucleotide sequence ID" value="NM_001404012.1"/>
</dbReference>
<dbReference type="RefSeq" id="NP_001390943.1">
    <molecule id="P10637-4"/>
    <property type="nucleotide sequence ID" value="NM_001404014.1"/>
</dbReference>
<dbReference type="RefSeq" id="NP_001390944.1">
    <molecule id="P10637-4"/>
    <property type="nucleotide sequence ID" value="NM_001404015.1"/>
</dbReference>
<dbReference type="RefSeq" id="NP_001390945.1">
    <molecule id="P10637-4"/>
    <property type="nucleotide sequence ID" value="NM_001404016.1"/>
</dbReference>
<dbReference type="RefSeq" id="NP_034968.3">
    <molecule id="P10637-5"/>
    <property type="nucleotide sequence ID" value="NM_010838.4"/>
</dbReference>
<dbReference type="PDB" id="6H0E">
    <property type="method" value="X-ray"/>
    <property type="resolution" value="1.95 A"/>
    <property type="chains" value="G/I/J/K=698-721"/>
</dbReference>
<dbReference type="PDB" id="8Q96">
    <property type="method" value="EM"/>
    <property type="resolution" value="3.09 A"/>
    <property type="chains" value="A/D/G/J=566-621"/>
</dbReference>
<dbReference type="PDBsum" id="6H0E"/>
<dbReference type="PDBsum" id="8Q96"/>
<dbReference type="BMRB" id="P10637"/>
<dbReference type="EMDB" id="EMD-18269"/>
<dbReference type="EMDB" id="EMD-37445"/>
<dbReference type="SMR" id="P10637"/>
<dbReference type="BioGRID" id="201589">
    <property type="interactions" value="329"/>
</dbReference>
<dbReference type="CORUM" id="P10637"/>
<dbReference type="FunCoup" id="P10637">
    <property type="interactions" value="590"/>
</dbReference>
<dbReference type="IntAct" id="P10637">
    <property type="interactions" value="8"/>
</dbReference>
<dbReference type="MINT" id="P10637"/>
<dbReference type="ChEMBL" id="CHEMBL4296281"/>
<dbReference type="GlyCosmos" id="P10637">
    <property type="glycosylation" value="1 site, No reported glycans"/>
</dbReference>
<dbReference type="GlyGen" id="P10637">
    <property type="glycosylation" value="9 sites, 2 N-linked glycans (2 sites), 1 O-linked glycan (4 sites)"/>
</dbReference>
<dbReference type="iPTMnet" id="P10637"/>
<dbReference type="PhosphoSitePlus" id="P10637"/>
<dbReference type="SwissPalm" id="P10637"/>
<dbReference type="jPOST" id="P10637"/>
<dbReference type="PeptideAtlas" id="P10637"/>
<dbReference type="ProteomicsDB" id="259354">
    <molecule id="P10637-1"/>
</dbReference>
<dbReference type="ProteomicsDB" id="259355">
    <molecule id="P10637-2"/>
</dbReference>
<dbReference type="ProteomicsDB" id="259356">
    <molecule id="P10637-3"/>
</dbReference>
<dbReference type="ProteomicsDB" id="259357">
    <molecule id="P10637-4"/>
</dbReference>
<dbReference type="ProteomicsDB" id="259358">
    <molecule id="P10637-5"/>
</dbReference>
<dbReference type="ProteomicsDB" id="259359">
    <molecule id="P10637-6"/>
</dbReference>
<dbReference type="Antibodypedia" id="3124">
    <property type="antibodies" value="5663 antibodies from 53 providers"/>
</dbReference>
<dbReference type="DNASU" id="17762"/>
<dbReference type="Ensembl" id="ENSMUST00000100347.11">
    <molecule id="P10637-2"/>
    <property type="protein sequence ID" value="ENSMUSP00000097919.5"/>
    <property type="gene ID" value="ENSMUSG00000018411.18"/>
</dbReference>
<dbReference type="Ensembl" id="ENSMUST00000106992.10">
    <molecule id="P10637-5"/>
    <property type="protein sequence ID" value="ENSMUSP00000102605.4"/>
    <property type="gene ID" value="ENSMUSG00000018411.18"/>
</dbReference>
<dbReference type="GeneID" id="17762"/>
<dbReference type="KEGG" id="mmu:17762"/>
<dbReference type="UCSC" id="uc007lwf.2">
    <molecule id="P10637-3"/>
    <property type="organism name" value="mouse"/>
</dbReference>
<dbReference type="UCSC" id="uc007lwg.2">
    <molecule id="P10637-2"/>
    <property type="organism name" value="mouse"/>
</dbReference>
<dbReference type="UCSC" id="uc007lwi.2">
    <molecule id="P10637-4"/>
    <property type="organism name" value="mouse"/>
</dbReference>
<dbReference type="UCSC" id="uc011yga.2">
    <molecule id="P10637-6"/>
    <property type="organism name" value="mouse"/>
</dbReference>
<dbReference type="AGR" id="MGI:97180"/>
<dbReference type="CTD" id="4137"/>
<dbReference type="MGI" id="MGI:97180">
    <property type="gene designation" value="Mapt"/>
</dbReference>
<dbReference type="VEuPathDB" id="HostDB:ENSMUSG00000018411"/>
<dbReference type="eggNOG" id="KOG2418">
    <property type="taxonomic scope" value="Eukaryota"/>
</dbReference>
<dbReference type="GeneTree" id="ENSGT00940000155494"/>
<dbReference type="HOGENOM" id="CLU_021741_3_1_1"/>
<dbReference type="InParanoid" id="P10637"/>
<dbReference type="TreeFam" id="TF316358"/>
<dbReference type="Reactome" id="R-MMU-264870">
    <property type="pathway name" value="Caspase-mediated cleavage of cytoskeletal proteins"/>
</dbReference>
<dbReference type="Reactome" id="R-MMU-9833482">
    <property type="pathway name" value="PKR-mediated signaling"/>
</dbReference>
<dbReference type="BioGRID-ORCS" id="17762">
    <property type="hits" value="4 hits in 81 CRISPR screens"/>
</dbReference>
<dbReference type="CD-CODE" id="CE726F99">
    <property type="entry name" value="Postsynaptic density"/>
</dbReference>
<dbReference type="CD-CODE" id="E94C8F89">
    <property type="entry name" value="Tau inclusion"/>
</dbReference>
<dbReference type="ChiTaRS" id="Mapt">
    <property type="organism name" value="mouse"/>
</dbReference>
<dbReference type="PRO" id="PR:P10637"/>
<dbReference type="Proteomes" id="UP000000589">
    <property type="component" value="Chromosome 11"/>
</dbReference>
<dbReference type="RNAct" id="P10637">
    <property type="molecule type" value="protein"/>
</dbReference>
<dbReference type="Bgee" id="ENSMUSG00000018411">
    <property type="expression patterns" value="Expressed in embryonic brain and 231 other cell types or tissues"/>
</dbReference>
<dbReference type="ExpressionAtlas" id="P10637">
    <property type="expression patterns" value="baseline and differential"/>
</dbReference>
<dbReference type="GO" id="GO:0030424">
    <property type="term" value="C:axon"/>
    <property type="evidence" value="ECO:0000314"/>
    <property type="project" value="MGI"/>
</dbReference>
<dbReference type="GO" id="GO:0005930">
    <property type="term" value="C:axoneme"/>
    <property type="evidence" value="ECO:0000314"/>
    <property type="project" value="MGI"/>
</dbReference>
<dbReference type="GO" id="GO:0044297">
    <property type="term" value="C:cell body"/>
    <property type="evidence" value="ECO:0000314"/>
    <property type="project" value="ARUK-UCL"/>
</dbReference>
<dbReference type="GO" id="GO:0005737">
    <property type="term" value="C:cytoplasm"/>
    <property type="evidence" value="ECO:0000314"/>
    <property type="project" value="MGI"/>
</dbReference>
<dbReference type="GO" id="GO:0005829">
    <property type="term" value="C:cytosol"/>
    <property type="evidence" value="ECO:0000314"/>
    <property type="project" value="ParkinsonsUK-UCL"/>
</dbReference>
<dbReference type="GO" id="GO:0030425">
    <property type="term" value="C:dendrite"/>
    <property type="evidence" value="ECO:0000250"/>
    <property type="project" value="UniProtKB"/>
</dbReference>
<dbReference type="GO" id="GO:0005576">
    <property type="term" value="C:extracellular region"/>
    <property type="evidence" value="ECO:0007669"/>
    <property type="project" value="UniProtKB-SubCell"/>
</dbReference>
<dbReference type="GO" id="GO:0097386">
    <property type="term" value="C:glial cell projection"/>
    <property type="evidence" value="ECO:0000314"/>
    <property type="project" value="ARUK-UCL"/>
</dbReference>
<dbReference type="GO" id="GO:0030426">
    <property type="term" value="C:growth cone"/>
    <property type="evidence" value="ECO:0000250"/>
    <property type="project" value="UniProtKB"/>
</dbReference>
<dbReference type="GO" id="GO:0045121">
    <property type="term" value="C:membrane raft"/>
    <property type="evidence" value="ECO:0000314"/>
    <property type="project" value="ARUK-UCL"/>
</dbReference>
<dbReference type="GO" id="GO:0005874">
    <property type="term" value="C:microtubule"/>
    <property type="evidence" value="ECO:0007669"/>
    <property type="project" value="UniProtKB-KW"/>
</dbReference>
<dbReference type="GO" id="GO:0015630">
    <property type="term" value="C:microtubule cytoskeleton"/>
    <property type="evidence" value="ECO:0000314"/>
    <property type="project" value="MGI"/>
</dbReference>
<dbReference type="GO" id="GO:0005634">
    <property type="term" value="C:nucleus"/>
    <property type="evidence" value="ECO:0000314"/>
    <property type="project" value="ParkinsonsUK-UCL"/>
</dbReference>
<dbReference type="GO" id="GO:0005886">
    <property type="term" value="C:plasma membrane"/>
    <property type="evidence" value="ECO:0000250"/>
    <property type="project" value="UniProtKB"/>
</dbReference>
<dbReference type="GO" id="GO:0014069">
    <property type="term" value="C:postsynaptic density"/>
    <property type="evidence" value="ECO:0000314"/>
    <property type="project" value="MGI"/>
</dbReference>
<dbReference type="GO" id="GO:0045298">
    <property type="term" value="C:tubulin complex"/>
    <property type="evidence" value="ECO:0000250"/>
    <property type="project" value="UniProtKB"/>
</dbReference>
<dbReference type="GO" id="GO:0003677">
    <property type="term" value="F:DNA binding"/>
    <property type="evidence" value="ECO:0000314"/>
    <property type="project" value="ParkinsonsUK-UCL"/>
</dbReference>
<dbReference type="GO" id="GO:0019899">
    <property type="term" value="F:enzyme binding"/>
    <property type="evidence" value="ECO:0000353"/>
    <property type="project" value="ARUK-UCL"/>
</dbReference>
<dbReference type="GO" id="GO:0008017">
    <property type="term" value="F:microtubule binding"/>
    <property type="evidence" value="ECO:0000314"/>
    <property type="project" value="MGI"/>
</dbReference>
<dbReference type="GO" id="GO:0019901">
    <property type="term" value="F:protein kinase binding"/>
    <property type="evidence" value="ECO:0000353"/>
    <property type="project" value="ARUK-UCL"/>
</dbReference>
<dbReference type="GO" id="GO:0007628">
    <property type="term" value="P:adult walking behavior"/>
    <property type="evidence" value="ECO:0000316"/>
    <property type="project" value="MGI"/>
</dbReference>
<dbReference type="GO" id="GO:0008088">
    <property type="term" value="P:axo-dendritic transport"/>
    <property type="evidence" value="ECO:0000316"/>
    <property type="project" value="MGI"/>
</dbReference>
<dbReference type="GO" id="GO:0048675">
    <property type="term" value="P:axon extension"/>
    <property type="evidence" value="ECO:0000315"/>
    <property type="project" value="MGI"/>
</dbReference>
<dbReference type="GO" id="GO:0007409">
    <property type="term" value="P:axonogenesis"/>
    <property type="evidence" value="ECO:0000316"/>
    <property type="project" value="MGI"/>
</dbReference>
<dbReference type="GO" id="GO:0006974">
    <property type="term" value="P:DNA damage response"/>
    <property type="evidence" value="ECO:0000315"/>
    <property type="project" value="ParkinsonsUK-UCL"/>
</dbReference>
<dbReference type="GO" id="GO:0046907">
    <property type="term" value="P:intracellular transport"/>
    <property type="evidence" value="ECO:0000315"/>
    <property type="project" value="MGI"/>
</dbReference>
<dbReference type="GO" id="GO:0000226">
    <property type="term" value="P:microtubule cytoskeleton organization"/>
    <property type="evidence" value="ECO:0000315"/>
    <property type="project" value="MGI"/>
</dbReference>
<dbReference type="GO" id="GO:0047497">
    <property type="term" value="P:mitochondrion transport along microtubule"/>
    <property type="evidence" value="ECO:0000315"/>
    <property type="project" value="MGI"/>
</dbReference>
<dbReference type="GO" id="GO:0032387">
    <property type="term" value="P:negative regulation of intracellular transport"/>
    <property type="evidence" value="ECO:0000315"/>
    <property type="project" value="MGI"/>
</dbReference>
<dbReference type="GO" id="GO:1904428">
    <property type="term" value="P:negative regulation of tubulin deacetylation"/>
    <property type="evidence" value="ECO:0000316"/>
    <property type="project" value="ARUK-UCL"/>
</dbReference>
<dbReference type="GO" id="GO:0001764">
    <property type="term" value="P:neuron migration"/>
    <property type="evidence" value="ECO:0000315"/>
    <property type="project" value="MGI"/>
</dbReference>
<dbReference type="GO" id="GO:0045773">
    <property type="term" value="P:positive regulation of axon extension"/>
    <property type="evidence" value="ECO:0000250"/>
    <property type="project" value="UniProtKB"/>
</dbReference>
<dbReference type="GO" id="GO:0031116">
    <property type="term" value="P:positive regulation of microtubule polymerization"/>
    <property type="evidence" value="ECO:0000250"/>
    <property type="project" value="UniProtKB"/>
</dbReference>
<dbReference type="GO" id="GO:0010506">
    <property type="term" value="P:regulation of autophagy"/>
    <property type="evidence" value="ECO:0000266"/>
    <property type="project" value="MGI"/>
</dbReference>
<dbReference type="GO" id="GO:1900034">
    <property type="term" value="P:regulation of cellular response to heat"/>
    <property type="evidence" value="ECO:0000315"/>
    <property type="project" value="ParkinsonsUK-UCL"/>
</dbReference>
<dbReference type="GO" id="GO:0060632">
    <property type="term" value="P:regulation of microtubule-based movement"/>
    <property type="evidence" value="ECO:0000314"/>
    <property type="project" value="MGI"/>
</dbReference>
<dbReference type="InterPro" id="IPR027324">
    <property type="entry name" value="MAP2/MAP4/Tau"/>
</dbReference>
<dbReference type="InterPro" id="IPR001084">
    <property type="entry name" value="MAP_tubulin-bd_rpt"/>
</dbReference>
<dbReference type="InterPro" id="IPR002955">
    <property type="entry name" value="Tau"/>
</dbReference>
<dbReference type="PANTHER" id="PTHR11501">
    <property type="entry name" value="MICROTUBULE-ASSOCIATED PROTEIN"/>
    <property type="match status" value="1"/>
</dbReference>
<dbReference type="PANTHER" id="PTHR11501:SF14">
    <property type="entry name" value="MICROTUBULE-ASSOCIATED PROTEIN TAU"/>
    <property type="match status" value="1"/>
</dbReference>
<dbReference type="Pfam" id="PF00418">
    <property type="entry name" value="Tubulin-binding"/>
    <property type="match status" value="4"/>
</dbReference>
<dbReference type="PRINTS" id="PR01261">
    <property type="entry name" value="TAUPROTEIN"/>
</dbReference>
<dbReference type="PROSITE" id="PS00229">
    <property type="entry name" value="TAU_MAP_1"/>
    <property type="match status" value="4"/>
</dbReference>
<dbReference type="PROSITE" id="PS51491">
    <property type="entry name" value="TAU_MAP_2"/>
    <property type="match status" value="4"/>
</dbReference>
<protein>
    <recommendedName>
        <fullName evidence="14">Microtubule-associated protein tau</fullName>
    </recommendedName>
    <alternativeName>
        <fullName>Neurofibrillary tangle protein</fullName>
    </alternativeName>
    <alternativeName>
        <fullName>Paired helical filament-tau</fullName>
        <shortName>PHF-tau</shortName>
    </alternativeName>
</protein>
<keyword id="KW-0002">3D-structure</keyword>
<keyword id="KW-0007">Acetylation</keyword>
<keyword id="KW-0025">Alternative splicing</keyword>
<keyword id="KW-1003">Cell membrane</keyword>
<keyword id="KW-0966">Cell projection</keyword>
<keyword id="KW-0963">Cytoplasm</keyword>
<keyword id="KW-0206">Cytoskeleton</keyword>
<keyword id="KW-0903">Direct protein sequencing</keyword>
<keyword id="KW-1015">Disulfide bond</keyword>
<keyword id="KW-0325">Glycoprotein</keyword>
<keyword id="KW-1017">Isopeptide bond</keyword>
<keyword id="KW-0472">Membrane</keyword>
<keyword id="KW-0488">Methylation</keyword>
<keyword id="KW-0493">Microtubule</keyword>
<keyword id="KW-0597">Phosphoprotein</keyword>
<keyword id="KW-1185">Reference proteome</keyword>
<keyword id="KW-0677">Repeat</keyword>
<keyword id="KW-0964">Secreted</keyword>
<keyword id="KW-0832">Ubl conjugation</keyword>
<sequence>MADPRQEFDTMEDHAGDYTLLQDQEGDMDHGLKESPPQPPADDGAEEPGSETSDAKSTPTAEDVTAPLVDERAPDKQAAAQPHTEIPEGITAEEAGIGDTPNQEDQAAGHVTQGRREGQAPDLGTSDWTRQQVSSMSGAPLLPQGLREATCQPSGTRPEDIEKSHPASELLRRGPPQKEGWGQDRLGSEEEVDEDLTVDESSQDSPPSQASLTPGRAAPQAGSGSVCGETASVPGLPTEGSVPLPADFFSKVSAETQASQPEGPGTGPMEEGHEAAPEFTFHVEIKASTPKEQDLEGATVVGVPGEEQKAQTQGPSVGKGTKEASLQEPPGKQPAAGLPGRPVSRVPQLKARVASKDRTGNDEKKAKTSTPSCAKAPSHRPCLSPTRPTLGSSDPLIKPSSPAVSPEPATSPKHVSSVTPRNGSPGTKQMKLKGADGKTGAKIATPRGAASPAQKGTSNATRIPAKTTPSPKTPPGSGEPPKSGERSGYSSPGSPGTPGSRSRTPSLPTPPTREPKKVAVVRTPPKSPSASKSRLQTAPVPMPDLKNVRSKIGSTENLKHQPGGGKVQIINKKLDLSNVQSKCGSKDNIKHVPGGGSVQIVYKPVDLSKVTSKCGSLGNIHHKPGGGQVEVKSEKLDFKDRVQSKIGSLDNITHVPGGGNKKIETHKLTFRENAKAKTDHGAEIVYKSPVVSGDTSPRHLSNVSSTGSIDMVDSPQLATLADEVSASLAKQGL</sequence>
<organism>
    <name type="scientific">Mus musculus</name>
    <name type="common">Mouse</name>
    <dbReference type="NCBI Taxonomy" id="10090"/>
    <lineage>
        <taxon>Eukaryota</taxon>
        <taxon>Metazoa</taxon>
        <taxon>Chordata</taxon>
        <taxon>Craniata</taxon>
        <taxon>Vertebrata</taxon>
        <taxon>Euteleostomi</taxon>
        <taxon>Mammalia</taxon>
        <taxon>Eutheria</taxon>
        <taxon>Euarchontoglires</taxon>
        <taxon>Glires</taxon>
        <taxon>Rodentia</taxon>
        <taxon>Myomorpha</taxon>
        <taxon>Muroidea</taxon>
        <taxon>Muridae</taxon>
        <taxon>Murinae</taxon>
        <taxon>Mus</taxon>
        <taxon>Mus</taxon>
    </lineage>
</organism>
<accession>P10637</accession>
<accession>A2A5Y9</accession>
<accession>P10638</accession>
<accession>Q60684</accession>
<accession>Q60685</accession>
<accession>Q60686</accession>
<accession>Q62286</accession>
<accession>Q91WK4</accession>
<gene>
    <name evidence="15" type="primary">Mapt</name>
    <name type="synonym">Mtapt</name>
    <name type="synonym">Tau</name>
</gene>
<feature type="initiator methionine" description="Removed" evidence="2">
    <location>
        <position position="1"/>
    </location>
</feature>
<feature type="chain" id="PRO_0000072742" description="Microtubule-associated protein tau">
    <location>
        <begin position="2"/>
        <end position="733"/>
    </location>
</feature>
<feature type="repeat" description="Tau/MAP 1" evidence="4">
    <location>
        <begin position="536"/>
        <end position="566"/>
    </location>
</feature>
<feature type="repeat" description="Tau/MAP 2" evidence="4">
    <location>
        <begin position="567"/>
        <end position="597"/>
    </location>
</feature>
<feature type="repeat" description="Tau/MAP 3" evidence="4">
    <location>
        <begin position="598"/>
        <end position="628"/>
    </location>
</feature>
<feature type="repeat" description="Tau/MAP 4" evidence="4">
    <location>
        <begin position="629"/>
        <end position="660"/>
    </location>
</feature>
<feature type="region of interest" description="Disordered" evidence="5">
    <location>
        <begin position="1"/>
        <end position="548"/>
    </location>
</feature>
<feature type="region of interest" description="Disordered" evidence="5">
    <location>
        <begin position="690"/>
        <end position="709"/>
    </location>
</feature>
<feature type="compositionally biased region" description="Basic and acidic residues" evidence="5">
    <location>
        <begin position="1"/>
        <end position="16"/>
    </location>
</feature>
<feature type="compositionally biased region" description="Polar residues" evidence="5">
    <location>
        <begin position="50"/>
        <end position="60"/>
    </location>
</feature>
<feature type="compositionally biased region" description="Polar residues" evidence="5">
    <location>
        <begin position="126"/>
        <end position="137"/>
    </location>
</feature>
<feature type="compositionally biased region" description="Basic and acidic residues" evidence="5">
    <location>
        <begin position="157"/>
        <end position="172"/>
    </location>
</feature>
<feature type="compositionally biased region" description="Acidic residues" evidence="5">
    <location>
        <begin position="189"/>
        <end position="202"/>
    </location>
</feature>
<feature type="compositionally biased region" description="Polar residues" evidence="5">
    <location>
        <begin position="203"/>
        <end position="212"/>
    </location>
</feature>
<feature type="compositionally biased region" description="Basic and acidic residues" evidence="5">
    <location>
        <begin position="270"/>
        <end position="294"/>
    </location>
</feature>
<feature type="compositionally biased region" description="Basic and acidic residues" evidence="5">
    <location>
        <begin position="354"/>
        <end position="366"/>
    </location>
</feature>
<feature type="compositionally biased region" description="Polar residues" evidence="5">
    <location>
        <begin position="413"/>
        <end position="427"/>
    </location>
</feature>
<feature type="compositionally biased region" description="Low complexity" evidence="5">
    <location>
        <begin position="479"/>
        <end position="506"/>
    </location>
</feature>
<feature type="compositionally biased region" description="Polar residues" evidence="5">
    <location>
        <begin position="693"/>
        <end position="708"/>
    </location>
</feature>
<feature type="modified residue" description="N-acetylalanine" evidence="2">
    <location>
        <position position="2"/>
    </location>
</feature>
<feature type="modified residue" description="Phosphotyrosine; by FYN" evidence="6">
    <location>
        <position position="18"/>
    </location>
</feature>
<feature type="modified residue" description="Phosphoserine" evidence="3">
    <location>
        <position position="35"/>
    </location>
</feature>
<feature type="modified residue" description="Phosphoserine" evidence="3">
    <location>
        <position position="50"/>
    </location>
</feature>
<feature type="modified residue" description="Phosphothreonine" evidence="10">
    <location>
        <position position="58"/>
    </location>
</feature>
<feature type="modified residue" description="Phosphothreonine" evidence="3">
    <location>
        <position position="60"/>
    </location>
</feature>
<feature type="modified residue" description="Phosphothreonine" evidence="10">
    <location>
        <position position="100"/>
    </location>
</feature>
<feature type="modified residue" description="Omega-N-methylarginine" evidence="10">
    <location>
        <position position="115"/>
    </location>
</feature>
<feature type="modified residue" description="Phosphoserine" evidence="18">
    <location>
        <position position="188"/>
    </location>
</feature>
<feature type="modified residue" description="Phosphothreonine" evidence="2">
    <location>
        <position position="445"/>
    </location>
</feature>
<feature type="modified residue" description="Omega-N-methylarginine" evidence="10">
    <location>
        <position position="447"/>
    </location>
</feature>
<feature type="modified residue" description="Phosphoserine" evidence="10">
    <location>
        <position position="451"/>
    </location>
</feature>
<feature type="modified residue" description="N6,N6-dimethyllysine; alternate" evidence="10">
    <location>
        <position position="455"/>
    </location>
</feature>
<feature type="modified residue" description="N6-acetyllysine; alternate" evidence="10">
    <location>
        <position position="455"/>
    </location>
</feature>
<feature type="modified residue" description="Phosphothreonine" evidence="10">
    <location>
        <position position="461"/>
    </location>
</feature>
<feature type="modified residue" description="Phosphothreonine" evidence="10">
    <location>
        <position position="467"/>
    </location>
</feature>
<feature type="modified residue" description="Phosphothreonine" evidence="18">
    <location>
        <position position="468"/>
    </location>
</feature>
<feature type="modified residue" description="Phosphoserine" evidence="10 18">
    <location>
        <position position="470"/>
    </location>
</feature>
<feature type="modified residue" description="Phosphothreonine" evidence="10">
    <location>
        <position position="473"/>
    </location>
</feature>
<feature type="modified residue" description="Phosphoserine" evidence="10">
    <location>
        <position position="477"/>
    </location>
</feature>
<feature type="modified residue" description="Phosphoserine" evidence="10">
    <location>
        <position position="483"/>
    </location>
</feature>
<feature type="modified residue" description="Phosphoserine" evidence="10">
    <location>
        <position position="487"/>
    </location>
</feature>
<feature type="modified residue" description="Phosphotyrosine" evidence="18">
    <location>
        <position position="489"/>
    </location>
</feature>
<feature type="modified residue" description="Phosphoserine" evidence="10 18">
    <location>
        <position position="490"/>
    </location>
</feature>
<feature type="modified residue" description="Phosphoserine" evidence="10 18">
    <location>
        <position position="491"/>
    </location>
</feature>
<feature type="modified residue" description="Phosphoserine" evidence="10 17 18">
    <location>
        <position position="494"/>
    </location>
</feature>
<feature type="modified residue" description="Phosphothreonine" evidence="10 18">
    <location>
        <position position="497"/>
    </location>
</feature>
<feature type="modified residue" description="Phosphothreonine" evidence="10">
    <location>
        <position position="504"/>
    </location>
</feature>
<feature type="modified residue" description="Phosphoserine" evidence="10">
    <location>
        <position position="506"/>
    </location>
</feature>
<feature type="modified residue" description="Phosphothreonine" evidence="10">
    <location>
        <position position="509"/>
    </location>
</feature>
<feature type="modified residue" description="N6-acetyllysine" evidence="10">
    <location>
        <position position="517"/>
    </location>
</feature>
<feature type="modified residue" description="Phosphothreonine" evidence="10 18">
    <location>
        <position position="523"/>
    </location>
</feature>
<feature type="modified residue" description="Phosphoserine" evidence="10">
    <location>
        <position position="527"/>
    </location>
</feature>
<feature type="modified residue" description="Phosphoserine" evidence="10">
    <location>
        <position position="529"/>
    </location>
</feature>
<feature type="modified residue" description="Phosphoserine" evidence="10">
    <location>
        <position position="531"/>
    </location>
</feature>
<feature type="modified residue" description="N6-acetyllysine; alternate" evidence="10">
    <location>
        <position position="551"/>
    </location>
</feature>
<feature type="modified residue" description="N6-methyllysine; alternate" evidence="10">
    <location>
        <position position="551"/>
    </location>
</feature>
<feature type="modified residue" description="Phosphoserine; by MARK1, BRSK1, BRSK2 and PHK" evidence="7 9 10">
    <location>
        <position position="554"/>
    </location>
</feature>
<feature type="modified residue" description="N6-acetyllysine; alternate" evidence="10">
    <location>
        <position position="573"/>
    </location>
</feature>
<feature type="modified residue" description="Phosphoserine" evidence="2">
    <location>
        <position position="577"/>
    </location>
</feature>
<feature type="modified residue" description="Phosphoserine" evidence="2">
    <location>
        <position position="581"/>
    </location>
</feature>
<feature type="modified residue" description="N6-acetyllysine" evidence="10">
    <location>
        <position position="582"/>
    </location>
</feature>
<feature type="modified residue" description="Phosphoserine" evidence="2">
    <location>
        <position position="585"/>
    </location>
</feature>
<feature type="modified residue" description="N6-acetyllysine; alternate" evidence="10">
    <location>
        <position position="590"/>
    </location>
</feature>
<feature type="modified residue" description="Phosphoserine" evidence="2">
    <location>
        <position position="597"/>
    </location>
</feature>
<feature type="modified residue" description="N6,N6-dimethyllysine; alternate" evidence="10">
    <location>
        <position position="603"/>
    </location>
</feature>
<feature type="modified residue" description="N6-acetyllysine; alternate" evidence="10">
    <location>
        <position position="603"/>
    </location>
</feature>
<feature type="modified residue" description="N6-acetyllysine; alternate" evidence="10">
    <location>
        <position position="609"/>
    </location>
</feature>
<feature type="modified residue" description="N6-acetyllysine; alternate" evidence="10">
    <location>
        <position position="613"/>
    </location>
</feature>
<feature type="modified residue" description="Phosphoserine" evidence="2">
    <location>
        <position position="616"/>
    </location>
</feature>
<feature type="modified residue" description="N6-acetyllysine; alternate" evidence="10">
    <location>
        <position position="623"/>
    </location>
</feature>
<feature type="modified residue" description="N6-acetyllysine; alternate" evidence="10">
    <location>
        <position position="635"/>
    </location>
</feature>
<feature type="modified residue" description="N6-acetyllysine; alternate" evidence="10">
    <location>
        <position position="639"/>
    </location>
</feature>
<feature type="modified residue" description="Omega-N-methylarginine" evidence="10">
    <location>
        <position position="641"/>
    </location>
</feature>
<feature type="modified residue" description="Phosphoserine" evidence="2">
    <location>
        <position position="644"/>
    </location>
</feature>
<feature type="modified residue" description="Phosphoserine" evidence="10">
    <location>
        <position position="648"/>
    </location>
</feature>
<feature type="modified residue" description="N6-acetyllysine; alternate" evidence="10">
    <location>
        <position position="661"/>
    </location>
</feature>
<feature type="modified residue" description="N6-acetyllysine; alternate" evidence="10">
    <location>
        <position position="677"/>
    </location>
</feature>
<feature type="modified residue" description="Phosphotyrosine" evidence="10 18">
    <location>
        <position position="686"/>
    </location>
</feature>
<feature type="modified residue" description="Phosphoserine" evidence="10 17 18">
    <location>
        <position position="688"/>
    </location>
</feature>
<feature type="modified residue" description="Phosphoserine; alternate" evidence="10 17 18">
    <location>
        <position position="692"/>
    </location>
</feature>
<feature type="modified residue" description="Phosphothreonine" evidence="18">
    <location>
        <position position="695"/>
    </location>
</feature>
<feature type="modified residue" description="Phosphoserine" evidence="17 18">
    <location>
        <position position="696"/>
    </location>
</feature>
<feature type="modified residue" description="Phosphoserine" evidence="16 18">
    <location>
        <position position="701"/>
    </location>
</feature>
<feature type="modified residue" description="Phosphoserine" evidence="10 18">
    <location>
        <position position="708"/>
    </location>
</feature>
<feature type="modified residue" description="Phosphoserine" evidence="18">
    <location>
        <position position="714"/>
    </location>
</feature>
<feature type="modified residue" description="Phosphothreonine" evidence="2">
    <location>
        <position position="719"/>
    </location>
</feature>
<feature type="glycosylation site" description="O-linked (GlcNAc...) serine; alternate" evidence="10">
    <location>
        <position position="692"/>
    </location>
</feature>
<feature type="disulfide bond" evidence="1">
    <location>
        <begin position="583"/>
        <end position="614"/>
    </location>
</feature>
<feature type="cross-link" description="Glycyl lysine isopeptide (Lys-Gly) (interchain with G-Cter in ubiquitin)" evidence="10">
    <location>
        <position position="33"/>
    </location>
</feature>
<feature type="cross-link" description="Glycyl lysine isopeptide (Lys-Gly) (interchain with G-Cter in ubiquitin)" evidence="2">
    <location>
        <position position="546"/>
    </location>
</feature>
<feature type="cross-link" description="Glycyl lysine isopeptide (Lys-Gly) (interchain with G-Cter in ubiquitin); alternate" evidence="10">
    <location>
        <position position="551"/>
    </location>
</feature>
<feature type="cross-link" description="Glycyl lysine isopeptide (Lys-Gly) (interchain with G-Cter in ubiquitin)" evidence="10">
    <location>
        <position position="559"/>
    </location>
</feature>
<feature type="cross-link" description="Glycyl lysine isopeptide (Lys-Gly) (interchain with G-Cter in ubiquitin); alternate" evidence="10">
    <location>
        <position position="573"/>
    </location>
</feature>
<feature type="cross-link" description="Glycyl lysine isopeptide (Lys-Gly) (interchain with G-Cter in ubiquitin); alternate" evidence="10">
    <location>
        <position position="590"/>
    </location>
</feature>
<feature type="cross-link" description="Glycyl lysine isopeptide (Lys-Gly) (interchain with G-Cter in ubiquitin); alternate" evidence="10">
    <location>
        <position position="603"/>
    </location>
</feature>
<feature type="cross-link" description="Glycyl lysine isopeptide (Lys-Gly) (interchain with G-Cter in ubiquitin); alternate" evidence="10">
    <location>
        <position position="609"/>
    </location>
</feature>
<feature type="cross-link" description="Glycyl lysine isopeptide (Lys-Gly) (interchain with G-Cter in ubiquitin); alternate" evidence="10">
    <location>
        <position position="613"/>
    </location>
</feature>
<feature type="cross-link" description="Glycyl lysine isopeptide (Lys-Gly) (interchain with G-Cter in ubiquitin); alternate" evidence="10">
    <location>
        <position position="623"/>
    </location>
</feature>
<feature type="cross-link" description="Glycyl lysine isopeptide (Lys-Gly) (interchain with G-Cter in ubiquitin); alternate" evidence="10">
    <location>
        <position position="635"/>
    </location>
</feature>
<feature type="cross-link" description="Glycyl lysine isopeptide (Lys-Gly) (interchain with G-Cter in ubiquitin); alternate" evidence="10">
    <location>
        <position position="639"/>
    </location>
</feature>
<feature type="cross-link" description="Glycyl lysine isopeptide (Lys-Gly) (interchain with G-Cter in ubiquitin)" evidence="10">
    <location>
        <position position="645"/>
    </location>
</feature>
<feature type="cross-link" description="Glycyl lysine isopeptide (Lys-Gly) (interchain with G-Cter in ubiquitin); alternate" evidence="10">
    <location>
        <position position="661"/>
    </location>
</feature>
<feature type="cross-link" description="Glycyl lysine isopeptide (Lys-Gly) (interchain with G-Cter in ubiquitin)" evidence="10">
    <location>
        <position position="667"/>
    </location>
</feature>
<feature type="cross-link" description="Glycyl lysine isopeptide (Lys-Gly) (interchain with G-Cter in ubiquitin); alternate" evidence="10">
    <location>
        <position position="677"/>
    </location>
</feature>
<feature type="splice variant" id="VSP_003185" description="In isoform Tau-B, isoform Tau-C, isoform Tau-D and isoform Tau-E." evidence="11 12 13">
    <location>
        <begin position="34"/>
        <end position="91"/>
    </location>
</feature>
<feature type="splice variant" id="VSP_003186" description="In isoform Tau-E." evidence="13">
    <location>
        <begin position="92"/>
        <end position="113"/>
    </location>
</feature>
<feature type="splice variant" id="VSP_003187" description="In isoform Tau-A, isoform Tau-B, isoform Tau-C, isoform Tau-D and isoform Tau-E." evidence="11 12 13">
    <location>
        <begin position="114"/>
        <end position="350"/>
    </location>
</feature>
<feature type="splice variant" id="VSP_003188" description="In isoform Tau-A, isoform Tau-B, isoform Tau-C, isoform Tau-D and isoform Tau-E." evidence="11 12 13">
    <location>
        <begin position="368"/>
        <end position="433"/>
    </location>
</feature>
<feature type="splice variant" id="VSP_003189" description="In isoform Tau-B and isoform Tau-C." evidence="12">
    <location>
        <begin position="567"/>
        <end position="597"/>
    </location>
</feature>
<feature type="splice variant" id="VSP_003190" description="In isoform Tau-B." evidence="12">
    <original>L</original>
    <variation>KAALLSSQVWNYSHDLATITDLGL</variation>
    <location>
        <position position="733"/>
    </location>
</feature>
<feature type="sequence conflict" description="In Ref. 1." evidence="14" ref="1">
    <original>D</original>
    <variation>N</variation>
    <location>
        <position position="3"/>
    </location>
</feature>
<feature type="sequence conflict" description="In Ref. 1." evidence="14" ref="1">
    <original>D</original>
    <variation>N</variation>
    <location>
        <position position="9"/>
    </location>
</feature>
<feature type="sequence conflict" description="In Ref. 5; CAM14797." evidence="14" ref="5">
    <original>S</original>
    <variation>C</variation>
    <location>
        <position position="405"/>
    </location>
</feature>
<feature type="sequence conflict" description="In Ref. 2; CAA78121." evidence="14" ref="2">
    <original>P</original>
    <variation>T</variation>
    <location>
        <position position="528"/>
    </location>
</feature>
<feature type="sequence conflict" description="In Ref. 6; AAH14748." evidence="14" ref="6">
    <original>R</original>
    <variation>G</variation>
    <location>
        <position position="549"/>
    </location>
</feature>
<feature type="sequence conflict" description="In Ref. 1." evidence="14" ref="1">
    <original>E</original>
    <variation>Q</variation>
    <location>
        <position position="672"/>
    </location>
</feature>
<feature type="strand" evidence="20">
    <location>
        <begin position="567"/>
        <end position="575"/>
    </location>
</feature>
<feature type="strand" evidence="20">
    <location>
        <begin position="584"/>
        <end position="596"/>
    </location>
</feature>
<feature type="strand" evidence="20">
    <location>
        <begin position="598"/>
        <end position="603"/>
    </location>
</feature>
<feature type="strand" evidence="20">
    <location>
        <begin position="615"/>
        <end position="619"/>
    </location>
</feature>
<feature type="helix" evidence="19">
    <location>
        <begin position="714"/>
        <end position="716"/>
    </location>
</feature>
<reference key="1">
    <citation type="journal article" date="1992" name="Proc. Natl. Acad. Sci. U.S.A.">
        <title>Primary structure of high molecular weight tau present in the peripheral nervous system.</title>
        <authorList>
            <person name="Couchie D."/>
            <person name="Mavilia C."/>
            <person name="Georgieff I.S."/>
            <person name="Liem R.K.H."/>
            <person name="Shelanski M.L."/>
            <person name="Nunez J."/>
        </authorList>
    </citation>
    <scope>NUCLEOTIDE SEQUENCE [MRNA] (ISOFORM PNS-TAU)</scope>
    <source>
        <tissue>Neuroblastoma</tissue>
    </source>
</reference>
<reference key="2">
    <citation type="journal article" date="1994" name="Hepatology">
        <title>Expression of three- and four-repeat tau isoforms in mouse liver.</title>
        <authorList>
            <person name="Kenner L."/>
            <person name="el-Shabrawi Y."/>
            <person name="Hutter H."/>
            <person name="Forstner M."/>
            <person name="Zatloukal K."/>
            <person name="Hoefler G."/>
            <person name="Preisegger K.-H."/>
            <person name="Kurzbauer R."/>
            <person name="Denk H."/>
        </authorList>
    </citation>
    <scope>NUCLEOTIDE SEQUENCE [MRNA] (ISOFORMS TAU-A; TAU-D AND TAU-E)</scope>
    <source>
        <strain>Him OF1</strain>
        <tissue>Brain</tissue>
        <tissue>Kidney</tissue>
        <tissue>Liver</tissue>
    </source>
</reference>
<reference key="3">
    <citation type="journal article" date="1988" name="Science">
        <title>The primary structure and heterogeneity of tau protein from mouse brain.</title>
        <authorList>
            <person name="Lee G."/>
            <person name="Cowan N.J."/>
            <person name="Kirschner M."/>
        </authorList>
    </citation>
    <scope>NUCLEOTIDE SEQUENCE [MRNA] (ISOFORMS TAU-B AND TAU-C)</scope>
    <source>
        <tissue>Brain</tissue>
    </source>
</reference>
<reference key="4">
    <citation type="journal article" date="1994" name="Brain Res. Mol. Brain Res.">
        <title>Molecular diversity at the carboxyl terminus of human and rat tau.</title>
        <authorList>
            <person name="Sawa A."/>
            <person name="Oyama F."/>
            <person name="Matsushita M."/>
            <person name="Ihara Y."/>
        </authorList>
    </citation>
    <scope>PARTIAL NUCLEOTIDE SEQUENCE [GENOMIC DNA]</scope>
    <scope>ALTERNATIVE SPLICING (ISOFORM TAU-B)</scope>
    <source>
        <strain>ICR</strain>
        <tissue>Brain</tissue>
    </source>
</reference>
<reference key="5">
    <citation type="journal article" date="2009" name="PLoS Biol.">
        <title>Lineage-specific biology revealed by a finished genome assembly of the mouse.</title>
        <authorList>
            <person name="Church D.M."/>
            <person name="Goodstadt L."/>
            <person name="Hillier L.W."/>
            <person name="Zody M.C."/>
            <person name="Goldstein S."/>
            <person name="She X."/>
            <person name="Bult C.J."/>
            <person name="Agarwala R."/>
            <person name="Cherry J.L."/>
            <person name="DiCuccio M."/>
            <person name="Hlavina W."/>
            <person name="Kapustin Y."/>
            <person name="Meric P."/>
            <person name="Maglott D."/>
            <person name="Birtle Z."/>
            <person name="Marques A.C."/>
            <person name="Graves T."/>
            <person name="Zhou S."/>
            <person name="Teague B."/>
            <person name="Potamousis K."/>
            <person name="Churas C."/>
            <person name="Place M."/>
            <person name="Herschleb J."/>
            <person name="Runnheim R."/>
            <person name="Forrest D."/>
            <person name="Amos-Landgraf J."/>
            <person name="Schwartz D.C."/>
            <person name="Cheng Z."/>
            <person name="Lindblad-Toh K."/>
            <person name="Eichler E.E."/>
            <person name="Ponting C.P."/>
        </authorList>
    </citation>
    <scope>NUCLEOTIDE SEQUENCE [LARGE SCALE GENOMIC DNA]</scope>
    <source>
        <strain>C57BL/6J</strain>
    </source>
</reference>
<reference key="6">
    <citation type="journal article" date="2004" name="Genome Res.">
        <title>The status, quality, and expansion of the NIH full-length cDNA project: the Mammalian Gene Collection (MGC).</title>
        <authorList>
            <consortium name="The MGC Project Team"/>
        </authorList>
    </citation>
    <scope>NUCLEOTIDE SEQUENCE [LARGE SCALE MRNA] (ISOFORM TAU-D)</scope>
    <source>
        <tissue>Eye</tissue>
    </source>
</reference>
<reference key="7">
    <citation type="submission" date="2009-01" db="UniProtKB">
        <authorList>
            <person name="Lubec G."/>
            <person name="Sunyer B."/>
            <person name="Chen W.-Q."/>
        </authorList>
    </citation>
    <scope>PROTEIN SEQUENCE OF 504-513; 535-546; 591-609 AND 646-661</scope>
    <scope>IDENTIFICATION BY MASS SPECTROMETRY</scope>
    <source>
        <strain>OF1</strain>
        <tissue>Hippocampus</tissue>
    </source>
</reference>
<reference key="8">
    <citation type="journal article" date="1993" name="C. R. Acad. Sci. III, Sci. Vie">
        <title>High molecular weight tau proteins and acquisition of neuronal polarity in peripheral nervous system.</title>
        <authorList>
            <person name="Couchie D."/>
            <person name="Gache Y."/>
            <person name="Mavilia C."/>
            <person name="Guilleminot J."/>
            <person name="Bridoux A.-M."/>
            <person name="Nivez M.-P."/>
            <person name="Nunez J."/>
        </authorList>
    </citation>
    <scope>CHARACTERIZATION</scope>
</reference>
<reference key="9">
    <citation type="journal article" date="2004" name="J. Neurosci.">
        <title>Phosphorylation of tau by fyn: implications for Alzheimer's disease.</title>
        <authorList>
            <person name="Lee G."/>
            <person name="Thangavel R."/>
            <person name="Sharma V.M."/>
            <person name="Litersky J.M."/>
            <person name="Bhaskar K."/>
            <person name="Fang S.M."/>
            <person name="Do L.H."/>
            <person name="Andreadis A."/>
            <person name="Van Hoesen G."/>
            <person name="Ksiezak-Reding H."/>
        </authorList>
    </citation>
    <scope>PHOSPHORYLATION AT TYR-18 BY FYN</scope>
</reference>
<reference key="10">
    <citation type="journal article" date="2004" name="Mol. Cell. Proteomics">
        <title>Phosphoproteomic analysis of the developing mouse brain.</title>
        <authorList>
            <person name="Ballif B.A."/>
            <person name="Villen J."/>
            <person name="Beausoleil S.A."/>
            <person name="Schwartz D."/>
            <person name="Gygi S.P."/>
        </authorList>
    </citation>
    <scope>PHOSPHORYLATION [LARGE SCALE ANALYSIS] AT SER-701</scope>
    <scope>IDENTIFICATION BY MASS SPECTROMETRY [LARGE SCALE ANALYSIS]</scope>
    <source>
        <tissue>Embryonic brain</tissue>
    </source>
</reference>
<reference key="11">
    <citation type="journal article" date="2005" name="J. Neurochem.">
        <title>Sequestosome 1/p62 shuttles polyubiquitinated tau for proteasomal degradation.</title>
        <authorList>
            <person name="Babu J.R."/>
            <person name="Geetha T."/>
            <person name="Wooten M.W."/>
        </authorList>
    </citation>
    <scope>INTERACTION WITH PSMC2</scope>
</reference>
<reference key="12">
    <citation type="journal article" date="2005" name="Science">
        <title>Mammalian SAD kinases are required for neuronal polarization.</title>
        <authorList>
            <person name="Kishi M."/>
            <person name="Pan Y.A."/>
            <person name="Crump J.G."/>
            <person name="Sanes J.R."/>
        </authorList>
    </citation>
    <scope>PHOSPHORYLATION AT SER-554</scope>
</reference>
<reference key="13">
    <citation type="journal article" date="2006" name="Mol. Cell. Proteomics">
        <title>Comprehensive identification of phosphorylation sites in postsynaptic density preparations.</title>
        <authorList>
            <person name="Trinidad J.C."/>
            <person name="Specht C.G."/>
            <person name="Thalhammer A."/>
            <person name="Schoepfer R."/>
            <person name="Burlingame A.L."/>
        </authorList>
    </citation>
    <scope>IDENTIFICATION BY MASS SPECTROMETRY [LARGE SCALE ANALYSIS]</scope>
    <source>
        <tissue>Brain</tissue>
    </source>
</reference>
<reference key="14">
    <citation type="journal article" date="2007" name="Cell">
        <title>LKB1 and SAD kinases define a pathway required for the polarization of cortical neurons.</title>
        <authorList>
            <person name="Barnes A.P."/>
            <person name="Lilley B.N."/>
            <person name="Pan Y.A."/>
            <person name="Plummer L.J."/>
            <person name="Powell A.W."/>
            <person name="Raines A.N."/>
            <person name="Sanes J.R."/>
            <person name="Polleux F."/>
        </authorList>
    </citation>
    <scope>PHOSPHORYLATION AT SER-554</scope>
</reference>
<reference key="15">
    <citation type="journal article" date="2007" name="Mol. Cell. Proteomics">
        <title>Qualitative and quantitative analyses of protein phosphorylation in naive and stimulated mouse synaptosomal preparations.</title>
        <authorList>
            <person name="Munton R.P."/>
            <person name="Tweedie-Cullen R."/>
            <person name="Livingstone-Zatchej M."/>
            <person name="Weinandy F."/>
            <person name="Waidelich M."/>
            <person name="Longo D."/>
            <person name="Gehrig P."/>
            <person name="Potthast F."/>
            <person name="Rutishauser D."/>
            <person name="Gerrits B."/>
            <person name="Panse C."/>
            <person name="Schlapbach R."/>
            <person name="Mansuy I.M."/>
        </authorList>
    </citation>
    <scope>IDENTIFICATION BY MASS SPECTROMETRY [LARGE SCALE ANALYSIS]</scope>
    <source>
        <tissue>Brain cortex</tissue>
    </source>
</reference>
<reference key="16">
    <citation type="journal article" date="2007" name="Proc. Natl. Acad. Sci. U.S.A.">
        <title>Large-scale phosphorylation analysis of mouse liver.</title>
        <authorList>
            <person name="Villen J."/>
            <person name="Beausoleil S.A."/>
            <person name="Gerber S.A."/>
            <person name="Gygi S.P."/>
        </authorList>
    </citation>
    <scope>PHOSPHORYLATION [LARGE SCALE ANALYSIS] AT SER-494; SER-688; SER-692 AND SER-696</scope>
    <scope>IDENTIFICATION BY MASS SPECTROMETRY [LARGE SCALE ANALYSIS]</scope>
    <source>
        <tissue>Liver</tissue>
    </source>
</reference>
<reference key="17">
    <citation type="journal article" date="2010" name="Cell">
        <title>A tissue-specific atlas of mouse protein phosphorylation and expression.</title>
        <authorList>
            <person name="Huttlin E.L."/>
            <person name="Jedrychowski M.P."/>
            <person name="Elias J.E."/>
            <person name="Goswami T."/>
            <person name="Rad R."/>
            <person name="Beausoleil S.A."/>
            <person name="Villen J."/>
            <person name="Haas W."/>
            <person name="Sowa M.E."/>
            <person name="Gygi S.P."/>
        </authorList>
    </citation>
    <scope>PHOSPHORYLATION [LARGE SCALE ANALYSIS] AT SER-188; THR-468; SER-470; TYR-489; SER-490; SER-491; SER-494; THR-497; THR-523; TYR-686; SER-688; SER-692; THR-695; SER-696; SER-701; SER-708 AND SER-714</scope>
    <scope>IDENTIFICATION BY MASS SPECTROMETRY [LARGE SCALE ANALYSIS]</scope>
    <source>
        <tissue>Brain</tissue>
        <tissue>Brown adipose tissue</tissue>
        <tissue>Heart</tissue>
        <tissue>Kidney</tissue>
        <tissue>Liver</tissue>
        <tissue>Lung</tissue>
        <tissue>Pancreas</tissue>
        <tissue>Spleen</tissue>
        <tissue>Testis</tissue>
    </source>
</reference>
<reference key="18">
    <citation type="journal article" date="2015" name="Nat. Neurosci.">
        <title>Tau post-translational modifications in wild-type and human amyloid precursor protein transgenic mice.</title>
        <authorList>
            <person name="Morris M."/>
            <person name="Knudsen G.M."/>
            <person name="Maeda S."/>
            <person name="Trinidad J.C."/>
            <person name="Ioanoviciu A."/>
            <person name="Burlingame A.L."/>
            <person name="Mucke L."/>
        </authorList>
    </citation>
    <scope>ACETYLATION AT LYS-455; LYS-517; LYS-551; LYS-573; LYS-582; LYS-590; LYS-603; LYS-609; LYS-613; LYS-623; LYS-635; LYS-639; LYS-661 AND LYS-677</scope>
    <scope>GLYCOSYLATION AT SER-692</scope>
    <scope>METHYLATION AT ARG-115; ARG-447; LYS-455; LYS-551; LYS-603 AND ARG-641</scope>
    <scope>PHOSPHORYLATION AT THR-58; THR-100; SER-451; THR-461; THR-467; SER-470; THR-473; SER-477; SER-483; SER-487; SER-490; SER-491; SER-494; THR-497; THR-504; SER-506; THR-509; THR-523; SER-527; SER-529; SER-531; SER-554; SER-648; TYR-686; SER-688; SER-692 AND SER-708</scope>
    <scope>UBIQUITINATION AT LYS-33; LYS-551; LYS-559; LYS-573; LYS-590; LYS-603; LYS-609; LYS-613; LYS-623; LYS-635; LYS-639; LYS-645; LYS-661; LYS-667 AND LYS-677</scope>
</reference>
<comment type="function">
    <text>Promotes microtubule assembly and stability, and might be involved in the establishment and maintenance of neuronal polarity. The C-terminus binds axonal microtubules while the N-terminus binds neural plasma membrane components, suggesting that tau functions as a linker protein between both. Axonal polarity is predetermined by tau localization (in the neuronal cell) in the domain of the cell body defined by the centrosome. The short isoforms allow plasticity of the cytoskeleton whereas the longer isoforms may preferentially play a role in its stabilization.</text>
</comment>
<comment type="subunit">
    <text evidence="2 3 8">Interacts with MARK1, MARK2, MARK3 and MARK4 (By similarity). Interacts with SQSTM1 when polyubiquitinated (PubMed:15953362). Interacts with PSMC2 through SQSTM1 (PubMed:15953362). Interacts with FKBP4 (By similarity). Binds to CSNK1D (By similarity). Interacts with SGK1 (By similarity). Interacts with EPM2A; the interaction dephosphorylates MAPT at Ser-369 (By similarity). Interacts with PIN1 (By similarity). Interacts with LRRK2 (By similarity). Interacts with LRP1, leading to endocytosis; this interaction is reduced in the presence of LRPAP1/RAP (By similarity).</text>
</comment>
<comment type="interaction">
    <interactant intactId="EBI-774043">
        <id>P10637</id>
    </interactant>
    <interactant intactId="EBI-775152">
        <id>O08539</id>
        <label>Bin1</label>
    </interactant>
    <organismsDiffer>false</organismsDiffer>
    <experiments>2</experiments>
</comment>
<comment type="interaction">
    <interactant intactId="EBI-774043">
        <id>P10637</id>
    </interactant>
    <interactant intactId="EBI-2255561">
        <id>Q61644</id>
        <label>Pacsin1</label>
    </interactant>
    <organismsDiffer>false</organismsDiffer>
    <experiments>5</experiments>
</comment>
<comment type="interaction">
    <interactant intactId="EBI-774043">
        <id>P10637</id>
    </interactant>
    <interactant intactId="EBI-8327299">
        <id>P52479</id>
        <label>Usp10</label>
    </interactant>
    <organismsDiffer>false</organismsDiffer>
    <experiments>3</experiments>
</comment>
<comment type="subcellular location">
    <subcellularLocation>
        <location evidence="2">Cytoplasm</location>
        <location evidence="2">Cytosol</location>
    </subcellularLocation>
    <subcellularLocation>
        <location evidence="2">Cell membrane</location>
        <topology evidence="2">Peripheral membrane protein</topology>
        <orientation evidence="2">Cytoplasmic side</orientation>
    </subcellularLocation>
    <subcellularLocation>
        <location evidence="2">Cytoplasm</location>
        <location evidence="2">Cytoskeleton</location>
    </subcellularLocation>
    <subcellularLocation>
        <location evidence="2">Cell projection</location>
        <location evidence="2">Axon</location>
    </subcellularLocation>
    <subcellularLocation>
        <location evidence="2">Cell projection</location>
        <location evidence="2">Dendrite</location>
    </subcellularLocation>
    <subcellularLocation>
        <location evidence="2">Secreted</location>
    </subcellularLocation>
    <text evidence="2">Mostly found in the axons of neurons, in the cytosol and in association with plasma membrane components. Can be secreted; the secretion is dependent on protein unfolding and facilitated by the cargo receptor TMED10; it results in protein translocation from the cytoplasm into the ERGIC (endoplasmic reticulum-Golgi intermediate compartment) followed by vesicle entry and secretion.</text>
</comment>
<comment type="alternative products">
    <event type="alternative splicing"/>
    <isoform>
        <id>P10637-1</id>
        <name>PNS-Tau</name>
        <sequence type="displayed"/>
    </isoform>
    <isoform>
        <id>P10637-2</id>
        <name>Tau-A</name>
        <sequence type="described" ref="VSP_003187 VSP_003188"/>
    </isoform>
    <isoform>
        <id>P10637-3</id>
        <name>Tau-B</name>
        <sequence type="described" ref="VSP_003185 VSP_003187 VSP_003188 VSP_003189 VSP_003190"/>
    </isoform>
    <isoform>
        <id>P10637-4</id>
        <name>Tau-C</name>
        <sequence type="described" ref="VSP_003185 VSP_003187 VSP_003188 VSP_003189"/>
    </isoform>
    <isoform>
        <id>P10637-5</id>
        <name>Tau-D</name>
        <sequence type="described" ref="VSP_003185 VSP_003187 VSP_003188"/>
    </isoform>
    <isoform>
        <id>P10637-6</id>
        <name>Tau-E</name>
        <sequence type="described" ref="VSP_003185 VSP_003186 VSP_003187 VSP_003188"/>
    </isoform>
    <text>Additional isoforms seem to exist. Isoforms differ from each other by the presence or absence of up to 5 of the 14 exons. One of these optional exons contains the additional tau/MAP repeat. Two different C-termini are obtained either by the retention or the splicing of intron 13/14.</text>
</comment>
<comment type="tissue specificity">
    <text>Expressed in neurons and at a lower level in the liver and kidney. Isoform PNS-tau is expressed in the peripheral nervous system while the others are expressed in the central nervous system.</text>
</comment>
<comment type="developmental stage">
    <text>Shorter forms or low molecular weight tau (lMW-tau) are generally expressed at early development stages and longer forms or high molecular weight tau (hMW-tau) in the adult brain.</text>
</comment>
<comment type="domain">
    <text>The tau/MAP repeat binds to tubulin. Type I isoforms contain 3 repeats while type II isoforms contain 4 repeats.</text>
</comment>
<comment type="PTM">
    <text evidence="1">Polyubiquitinated. Requires functional TRAF6 and may provoke SQSTM1-dependent degradation by the proteasome (By similarity).</text>
</comment>
<comment type="PTM">
    <text evidence="1 2">Phosphorylation at various serine and threonine residues in S-P or T-P motifs by proline-directed protein kinases (PDPK1, CDK1, CDK5, GSK3, MAPK) (a few sites per protein in interphase, more in mitosis), and at serine residues in K-X-G-S motifs by MAP/microtubule affinity-regulating kinase (MARK1, MARK2, MARK3, MARK4), causing detachment from microtubules, and their disassembly (By similarity). Phosphorylated by PHK. Dephosphorylation at several serine and threonine residues by the serine/threonine phosphatase PPP5C. Phosphorylation at Ser-554 by BRSK1 and BRSK2 in neurons affects ability to bind microtubules and plays a role in neuron polarization. Phosphorylation at Ser-188 by SGK1 mediates microtubule depolymerization and neurite formation in hippocampal neurons (By similarity).</text>
</comment>
<comment type="disease">
    <text>May be involved in the pathogenesis of cytoplasmic inclusions (as Mallory bodies) in livers of mice chronically intoxicated with Griseofulvin or DDC (3,5-diethoxycarbonyl-2,4-dihydrocollidine), a model for human alcoholic hepatitis. Alteration of Tau (abnormal phosphorylation and cross-linking) could contribute to Mallory bodies formation and disturbance of microtubule function in alcoholic liver disease.</text>
</comment>
<proteinExistence type="evidence at protein level"/>
<name>TAU_MOUSE</name>